<proteinExistence type="inferred from homology"/>
<dbReference type="EMBL" id="CP001097">
    <property type="protein sequence ID" value="ACD91227.1"/>
    <property type="molecule type" value="Genomic_DNA"/>
</dbReference>
<dbReference type="RefSeq" id="WP_012467095.1">
    <property type="nucleotide sequence ID" value="NC_010803.1"/>
</dbReference>
<dbReference type="SMR" id="B3EGW4"/>
<dbReference type="STRING" id="290315.Clim_2203"/>
<dbReference type="KEGG" id="cli:Clim_2203"/>
<dbReference type="eggNOG" id="COG0522">
    <property type="taxonomic scope" value="Bacteria"/>
</dbReference>
<dbReference type="HOGENOM" id="CLU_092403_0_2_10"/>
<dbReference type="OrthoDB" id="9803672at2"/>
<dbReference type="Proteomes" id="UP000008841">
    <property type="component" value="Chromosome"/>
</dbReference>
<dbReference type="GO" id="GO:0015935">
    <property type="term" value="C:small ribosomal subunit"/>
    <property type="evidence" value="ECO:0007669"/>
    <property type="project" value="InterPro"/>
</dbReference>
<dbReference type="GO" id="GO:0019843">
    <property type="term" value="F:rRNA binding"/>
    <property type="evidence" value="ECO:0007669"/>
    <property type="project" value="UniProtKB-UniRule"/>
</dbReference>
<dbReference type="GO" id="GO:0003735">
    <property type="term" value="F:structural constituent of ribosome"/>
    <property type="evidence" value="ECO:0007669"/>
    <property type="project" value="InterPro"/>
</dbReference>
<dbReference type="GO" id="GO:0042274">
    <property type="term" value="P:ribosomal small subunit biogenesis"/>
    <property type="evidence" value="ECO:0007669"/>
    <property type="project" value="TreeGrafter"/>
</dbReference>
<dbReference type="GO" id="GO:0006412">
    <property type="term" value="P:translation"/>
    <property type="evidence" value="ECO:0007669"/>
    <property type="project" value="UniProtKB-UniRule"/>
</dbReference>
<dbReference type="CDD" id="cd00165">
    <property type="entry name" value="S4"/>
    <property type="match status" value="1"/>
</dbReference>
<dbReference type="FunFam" id="3.10.290.10:FF:000001">
    <property type="entry name" value="30S ribosomal protein S4"/>
    <property type="match status" value="1"/>
</dbReference>
<dbReference type="Gene3D" id="1.10.1050.10">
    <property type="entry name" value="Ribosomal Protein S4 Delta 41, Chain A, domain 1"/>
    <property type="match status" value="1"/>
</dbReference>
<dbReference type="Gene3D" id="3.10.290.10">
    <property type="entry name" value="RNA-binding S4 domain"/>
    <property type="match status" value="1"/>
</dbReference>
<dbReference type="HAMAP" id="MF_01306_B">
    <property type="entry name" value="Ribosomal_uS4_B"/>
    <property type="match status" value="1"/>
</dbReference>
<dbReference type="InterPro" id="IPR022801">
    <property type="entry name" value="Ribosomal_uS4"/>
</dbReference>
<dbReference type="InterPro" id="IPR005709">
    <property type="entry name" value="Ribosomal_uS4_bac-type"/>
</dbReference>
<dbReference type="InterPro" id="IPR018079">
    <property type="entry name" value="Ribosomal_uS4_CS"/>
</dbReference>
<dbReference type="InterPro" id="IPR001912">
    <property type="entry name" value="Ribosomal_uS4_N"/>
</dbReference>
<dbReference type="InterPro" id="IPR002942">
    <property type="entry name" value="S4_RNA-bd"/>
</dbReference>
<dbReference type="InterPro" id="IPR036986">
    <property type="entry name" value="S4_RNA-bd_sf"/>
</dbReference>
<dbReference type="NCBIfam" id="NF003717">
    <property type="entry name" value="PRK05327.1"/>
    <property type="match status" value="1"/>
</dbReference>
<dbReference type="NCBIfam" id="TIGR01017">
    <property type="entry name" value="rpsD_bact"/>
    <property type="match status" value="1"/>
</dbReference>
<dbReference type="PANTHER" id="PTHR11831">
    <property type="entry name" value="30S 40S RIBOSOMAL PROTEIN"/>
    <property type="match status" value="1"/>
</dbReference>
<dbReference type="PANTHER" id="PTHR11831:SF4">
    <property type="entry name" value="SMALL RIBOSOMAL SUBUNIT PROTEIN US4M"/>
    <property type="match status" value="1"/>
</dbReference>
<dbReference type="Pfam" id="PF00163">
    <property type="entry name" value="Ribosomal_S4"/>
    <property type="match status" value="1"/>
</dbReference>
<dbReference type="Pfam" id="PF01479">
    <property type="entry name" value="S4"/>
    <property type="match status" value="1"/>
</dbReference>
<dbReference type="SMART" id="SM01390">
    <property type="entry name" value="Ribosomal_S4"/>
    <property type="match status" value="1"/>
</dbReference>
<dbReference type="SMART" id="SM00363">
    <property type="entry name" value="S4"/>
    <property type="match status" value="1"/>
</dbReference>
<dbReference type="SUPFAM" id="SSF55174">
    <property type="entry name" value="Alpha-L RNA-binding motif"/>
    <property type="match status" value="1"/>
</dbReference>
<dbReference type="PROSITE" id="PS00632">
    <property type="entry name" value="RIBOSOMAL_S4"/>
    <property type="match status" value="1"/>
</dbReference>
<dbReference type="PROSITE" id="PS50889">
    <property type="entry name" value="S4"/>
    <property type="match status" value="1"/>
</dbReference>
<protein>
    <recommendedName>
        <fullName evidence="1">Small ribosomal subunit protein uS4</fullName>
    </recommendedName>
    <alternativeName>
        <fullName evidence="2">30S ribosomal protein S4</fullName>
    </alternativeName>
</protein>
<reference key="1">
    <citation type="submission" date="2008-05" db="EMBL/GenBank/DDBJ databases">
        <title>Complete sequence of Chlorobium limicola DSM 245.</title>
        <authorList>
            <consortium name="US DOE Joint Genome Institute"/>
            <person name="Lucas S."/>
            <person name="Copeland A."/>
            <person name="Lapidus A."/>
            <person name="Glavina del Rio T."/>
            <person name="Dalin E."/>
            <person name="Tice H."/>
            <person name="Bruce D."/>
            <person name="Goodwin L."/>
            <person name="Pitluck S."/>
            <person name="Schmutz J."/>
            <person name="Larimer F."/>
            <person name="Land M."/>
            <person name="Hauser L."/>
            <person name="Kyrpides N."/>
            <person name="Ovchinnikova G."/>
            <person name="Zhao F."/>
            <person name="Li T."/>
            <person name="Liu Z."/>
            <person name="Overmann J."/>
            <person name="Bryant D.A."/>
            <person name="Richardson P."/>
        </authorList>
    </citation>
    <scope>NUCLEOTIDE SEQUENCE [LARGE SCALE GENOMIC DNA]</scope>
    <source>
        <strain>DSM 245 / NBRC 103803 / 6330</strain>
    </source>
</reference>
<comment type="function">
    <text evidence="1">One of the primary rRNA binding proteins, it binds directly to 16S rRNA where it nucleates assembly of the body of the 30S subunit.</text>
</comment>
<comment type="function">
    <text evidence="1">With S5 and S12 plays an important role in translational accuracy.</text>
</comment>
<comment type="subunit">
    <text evidence="1">Part of the 30S ribosomal subunit. Contacts protein S5. The interaction surface between S4 and S5 is involved in control of translational fidelity.</text>
</comment>
<comment type="similarity">
    <text evidence="1">Belongs to the universal ribosomal protein uS4 family.</text>
</comment>
<gene>
    <name evidence="1" type="primary">rpsD</name>
    <name type="ordered locus">Clim_2203</name>
</gene>
<organism>
    <name type="scientific">Chlorobium limicola (strain DSM 245 / NBRC 103803 / 6330)</name>
    <dbReference type="NCBI Taxonomy" id="290315"/>
    <lineage>
        <taxon>Bacteria</taxon>
        <taxon>Pseudomonadati</taxon>
        <taxon>Chlorobiota</taxon>
        <taxon>Chlorobiia</taxon>
        <taxon>Chlorobiales</taxon>
        <taxon>Chlorobiaceae</taxon>
        <taxon>Chlorobium/Pelodictyon group</taxon>
        <taxon>Chlorobium</taxon>
    </lineage>
</organism>
<accession>B3EGW4</accession>
<name>RS4_CHLL2</name>
<feature type="chain" id="PRO_1000140703" description="Small ribosomal subunit protein uS4">
    <location>
        <begin position="1"/>
        <end position="203"/>
    </location>
</feature>
<feature type="domain" description="S4 RNA-binding" evidence="1">
    <location>
        <begin position="93"/>
        <end position="173"/>
    </location>
</feature>
<evidence type="ECO:0000255" key="1">
    <source>
        <dbReference type="HAMAP-Rule" id="MF_01306"/>
    </source>
</evidence>
<evidence type="ECO:0000305" key="2"/>
<sequence length="203" mass="23140">MARFRGSITKVSRRLGVALSPKAEKYLERRPFAPGQHGQSRKGKVSEYALQLREKQKMKYLYGILEKQFRNYYKKAVAQRGVTGDNLVKLLERRLDNVVFRSGFSASRAGARQLVSHGHLVVNGKKVNIPSFQVSPGDLIEFRQRSRNMGAVTDSLSKAPESRFPSWIQVDKANQKAVFLSVPEREDIQEPFNEQLVVELYSK</sequence>
<keyword id="KW-0687">Ribonucleoprotein</keyword>
<keyword id="KW-0689">Ribosomal protein</keyword>
<keyword id="KW-0694">RNA-binding</keyword>
<keyword id="KW-0699">rRNA-binding</keyword>